<comment type="function">
    <text evidence="1 6 7">Transcriptional regulator that acts as a repressor or activator (PubMed:8887638). Binds to Maf recognition elements (MARE) (PubMed:8887638). Plays an important role in coordinating transcription activation and repression by MAFK (PubMed:8887638). Induces apoptosis in response to oxidative stress through repression of the antiapoptotic factor HMOX1 (By similarity). Positively regulates the nuclear import of actin (PubMed:26021350). Is a key regulator of adaptive immunity, crucial for the maintenance of regulatory T-cell function and B-cell maturation (PubMed:28530713).</text>
</comment>
<comment type="subunit">
    <text evidence="1 8">Homodimer; disulfide-linked (By similarity). Heterodimer of BACH2 and Maf-related transcription factors (PubMed:8887638).</text>
</comment>
<comment type="subcellular location">
    <subcellularLocation>
        <location evidence="5">Cytoplasm</location>
    </subcellularLocation>
    <subcellularLocation>
        <location evidence="3 5">Nucleus</location>
    </subcellularLocation>
    <text evidence="1">Nucleocytoplasmic shuttling is controlled by phosphorylation.</text>
</comment>
<comment type="alternative products">
    <event type="alternative splicing"/>
    <isoform>
        <id>P97303-1</id>
        <name>1</name>
        <sequence type="displayed"/>
    </isoform>
    <isoform>
        <id>P97303-2</id>
        <name>2</name>
        <sequence type="described" ref="VSP_047933"/>
    </isoform>
</comment>
<comment type="tissue specificity">
    <text evidence="8">Detected in brain and spleen.</text>
</comment>
<comment type="developmental stage">
    <text evidence="8">In brain, expression is lower in the adult than in the neonate.</text>
</comment>
<comment type="PTM">
    <text evidence="1">The reversible disulfide bond may provide a mechanism to regulate the activity in oxidative stress responses.</text>
</comment>
<comment type="PTM">
    <text evidence="1">Phosphorylation at Ser-520 downstream of the PI-3K pathway promotes nuclear export.</text>
</comment>
<comment type="similarity">
    <text evidence="10">Belongs to the bZIP family. CNC subfamily.</text>
</comment>
<organism>
    <name type="scientific">Mus musculus</name>
    <name type="common">Mouse</name>
    <dbReference type="NCBI Taxonomy" id="10090"/>
    <lineage>
        <taxon>Eukaryota</taxon>
        <taxon>Metazoa</taxon>
        <taxon>Chordata</taxon>
        <taxon>Craniata</taxon>
        <taxon>Vertebrata</taxon>
        <taxon>Euteleostomi</taxon>
        <taxon>Mammalia</taxon>
        <taxon>Eutheria</taxon>
        <taxon>Euarchontoglires</taxon>
        <taxon>Glires</taxon>
        <taxon>Rodentia</taxon>
        <taxon>Myomorpha</taxon>
        <taxon>Muroidea</taxon>
        <taxon>Muridae</taxon>
        <taxon>Murinae</taxon>
        <taxon>Mus</taxon>
        <taxon>Mus</taxon>
    </lineage>
</organism>
<accession>P97303</accession>
<accession>A2ANU8</accession>
<accession>A2ANU9</accession>
<accession>A2RRI0</accession>
<dbReference type="EMBL" id="D86604">
    <property type="protein sequence ID" value="BAA13138.1"/>
    <property type="molecule type" value="mRNA"/>
</dbReference>
<dbReference type="EMBL" id="AL732547">
    <property type="status" value="NOT_ANNOTATED_CDS"/>
    <property type="molecule type" value="Genomic_DNA"/>
</dbReference>
<dbReference type="EMBL" id="AL831746">
    <property type="status" value="NOT_ANNOTATED_CDS"/>
    <property type="molecule type" value="Genomic_DNA"/>
</dbReference>
<dbReference type="EMBL" id="BC131642">
    <property type="protein sequence ID" value="AAI31643.1"/>
    <property type="molecule type" value="mRNA"/>
</dbReference>
<dbReference type="CCDS" id="CCDS51135.1">
    <molecule id="P97303-1"/>
</dbReference>
<dbReference type="RefSeq" id="NP_001103131.1">
    <molecule id="P97303-1"/>
    <property type="nucleotide sequence ID" value="NM_001109661.1"/>
</dbReference>
<dbReference type="RefSeq" id="XP_006537630.1">
    <molecule id="P97303-1"/>
    <property type="nucleotide sequence ID" value="XM_006537567.5"/>
</dbReference>
<dbReference type="RefSeq" id="XP_011248211.1">
    <molecule id="P97303-1"/>
    <property type="nucleotide sequence ID" value="XM_011249909.3"/>
</dbReference>
<dbReference type="RefSeq" id="XP_030108972.1">
    <molecule id="P97303-1"/>
    <property type="nucleotide sequence ID" value="XM_030253112.2"/>
</dbReference>
<dbReference type="RefSeq" id="XP_036019500.1">
    <molecule id="P97303-1"/>
    <property type="nucleotide sequence ID" value="XM_036163607.1"/>
</dbReference>
<dbReference type="RefSeq" id="XP_036019501.1">
    <molecule id="P97303-1"/>
    <property type="nucleotide sequence ID" value="XM_036163608.1"/>
</dbReference>
<dbReference type="SMR" id="P97303"/>
<dbReference type="BioGRID" id="198295">
    <property type="interactions" value="8"/>
</dbReference>
<dbReference type="FunCoup" id="P97303">
    <property type="interactions" value="2523"/>
</dbReference>
<dbReference type="IntAct" id="P97303">
    <property type="interactions" value="1"/>
</dbReference>
<dbReference type="STRING" id="10090.ENSMUSP00000103815"/>
<dbReference type="GlyGen" id="P97303">
    <property type="glycosylation" value="1 site"/>
</dbReference>
<dbReference type="iPTMnet" id="P97303"/>
<dbReference type="PhosphoSitePlus" id="P97303"/>
<dbReference type="jPOST" id="P97303"/>
<dbReference type="PaxDb" id="10090-ENSMUSP00000103815"/>
<dbReference type="PeptideAtlas" id="P97303"/>
<dbReference type="ProteomicsDB" id="273462">
    <molecule id="P97303-1"/>
</dbReference>
<dbReference type="ProteomicsDB" id="273463">
    <molecule id="P97303-2"/>
</dbReference>
<dbReference type="Antibodypedia" id="31919">
    <property type="antibodies" value="234 antibodies from 30 providers"/>
</dbReference>
<dbReference type="DNASU" id="12014"/>
<dbReference type="Ensembl" id="ENSMUST00000037416.13">
    <molecule id="P97303-2"/>
    <property type="protein sequence ID" value="ENSMUSP00000043693.7"/>
    <property type="gene ID" value="ENSMUSG00000040270.17"/>
</dbReference>
<dbReference type="Ensembl" id="ENSMUST00000108180.9">
    <molecule id="P97303-1"/>
    <property type="protein sequence ID" value="ENSMUSP00000103815.3"/>
    <property type="gene ID" value="ENSMUSG00000040270.17"/>
</dbReference>
<dbReference type="Ensembl" id="ENSMUST00000171600.2">
    <molecule id="P97303-1"/>
    <property type="protein sequence ID" value="ENSMUSP00000131592.2"/>
    <property type="gene ID" value="ENSMUSG00000040270.17"/>
</dbReference>
<dbReference type="GeneID" id="12014"/>
<dbReference type="KEGG" id="mmu:12014"/>
<dbReference type="UCSC" id="uc012dbf.1">
    <molecule id="P97303-1"/>
    <property type="organism name" value="mouse"/>
</dbReference>
<dbReference type="AGR" id="MGI:894679"/>
<dbReference type="CTD" id="60468"/>
<dbReference type="MGI" id="MGI:894679">
    <property type="gene designation" value="Bach2"/>
</dbReference>
<dbReference type="VEuPathDB" id="HostDB:ENSMUSG00000040270"/>
<dbReference type="eggNOG" id="KOG3863">
    <property type="taxonomic scope" value="Eukaryota"/>
</dbReference>
<dbReference type="GeneTree" id="ENSGT00940000158228"/>
<dbReference type="HOGENOM" id="CLU_015243_0_0_1"/>
<dbReference type="InParanoid" id="P97303"/>
<dbReference type="OMA" id="MMGDGMY"/>
<dbReference type="OrthoDB" id="6365358at2759"/>
<dbReference type="PhylomeDB" id="P97303"/>
<dbReference type="TreeFam" id="TF326681"/>
<dbReference type="BioGRID-ORCS" id="12014">
    <property type="hits" value="1 hit in 78 CRISPR screens"/>
</dbReference>
<dbReference type="ChiTaRS" id="Bach2">
    <property type="organism name" value="mouse"/>
</dbReference>
<dbReference type="PRO" id="PR:P97303"/>
<dbReference type="Proteomes" id="UP000000589">
    <property type="component" value="Chromosome 4"/>
</dbReference>
<dbReference type="RNAct" id="P97303">
    <property type="molecule type" value="protein"/>
</dbReference>
<dbReference type="Bgee" id="ENSMUSG00000040270">
    <property type="expression patterns" value="Expressed in animal zygote and 245 other cell types or tissues"/>
</dbReference>
<dbReference type="GO" id="GO:0005829">
    <property type="term" value="C:cytosol"/>
    <property type="evidence" value="ECO:0007669"/>
    <property type="project" value="Ensembl"/>
</dbReference>
<dbReference type="GO" id="GO:0005654">
    <property type="term" value="C:nucleoplasm"/>
    <property type="evidence" value="ECO:0007669"/>
    <property type="project" value="Ensembl"/>
</dbReference>
<dbReference type="GO" id="GO:0005634">
    <property type="term" value="C:nucleus"/>
    <property type="evidence" value="ECO:0000314"/>
    <property type="project" value="MGI"/>
</dbReference>
<dbReference type="GO" id="GO:0090575">
    <property type="term" value="C:RNA polymerase II transcription regulator complex"/>
    <property type="evidence" value="ECO:0007669"/>
    <property type="project" value="Ensembl"/>
</dbReference>
<dbReference type="GO" id="GO:0003677">
    <property type="term" value="F:DNA binding"/>
    <property type="evidence" value="ECO:0000314"/>
    <property type="project" value="MGI"/>
</dbReference>
<dbReference type="GO" id="GO:0003700">
    <property type="term" value="F:DNA-binding transcription factor activity"/>
    <property type="evidence" value="ECO:0000314"/>
    <property type="project" value="MGI"/>
</dbReference>
<dbReference type="GO" id="GO:0001227">
    <property type="term" value="F:DNA-binding transcription repressor activity, RNA polymerase II-specific"/>
    <property type="evidence" value="ECO:0000314"/>
    <property type="project" value="NTNU_SB"/>
</dbReference>
<dbReference type="GO" id="GO:0000978">
    <property type="term" value="F:RNA polymerase II cis-regulatory region sequence-specific DNA binding"/>
    <property type="evidence" value="ECO:0000314"/>
    <property type="project" value="NTNU_SB"/>
</dbReference>
<dbReference type="GO" id="GO:0051170">
    <property type="term" value="P:import into nucleus"/>
    <property type="evidence" value="ECO:0000315"/>
    <property type="project" value="UniProtKB"/>
</dbReference>
<dbReference type="GO" id="GO:0000122">
    <property type="term" value="P:negative regulation of transcription by RNA polymerase II"/>
    <property type="evidence" value="ECO:0000314"/>
    <property type="project" value="NTNU_SB"/>
</dbReference>
<dbReference type="GO" id="GO:0090721">
    <property type="term" value="P:primary adaptive immune response involving T cells and B cells"/>
    <property type="evidence" value="ECO:0007669"/>
    <property type="project" value="Ensembl"/>
</dbReference>
<dbReference type="GO" id="GO:0006355">
    <property type="term" value="P:regulation of DNA-templated transcription"/>
    <property type="evidence" value="ECO:0000314"/>
    <property type="project" value="MGI"/>
</dbReference>
<dbReference type="CDD" id="cd18278">
    <property type="entry name" value="BTB_POZ_BACH2"/>
    <property type="match status" value="1"/>
</dbReference>
<dbReference type="CDD" id="cd14719">
    <property type="entry name" value="bZIP_BACH"/>
    <property type="match status" value="1"/>
</dbReference>
<dbReference type="DisProt" id="DP01009"/>
<dbReference type="FunFam" id="1.10.880.10:FF:000002">
    <property type="entry name" value="transcription regulator protein BACH2 isoform X1"/>
    <property type="match status" value="1"/>
</dbReference>
<dbReference type="FunFam" id="3.30.710.10:FF:000033">
    <property type="entry name" value="transcription regulator protein BACH2 isoform X1"/>
    <property type="match status" value="1"/>
</dbReference>
<dbReference type="Gene3D" id="3.30.710.10">
    <property type="entry name" value="Potassium Channel Kv1.1, Chain A"/>
    <property type="match status" value="1"/>
</dbReference>
<dbReference type="Gene3D" id="1.10.880.10">
    <property type="entry name" value="Transcription factor, Skn-1-like, DNA-binding domain"/>
    <property type="match status" value="1"/>
</dbReference>
<dbReference type="InterPro" id="IPR000210">
    <property type="entry name" value="BTB/POZ_dom"/>
</dbReference>
<dbReference type="InterPro" id="IPR004827">
    <property type="entry name" value="bZIP"/>
</dbReference>
<dbReference type="InterPro" id="IPR043321">
    <property type="entry name" value="bZIP_BACH"/>
</dbReference>
<dbReference type="InterPro" id="IPR004826">
    <property type="entry name" value="bZIP_Maf"/>
</dbReference>
<dbReference type="InterPro" id="IPR046347">
    <property type="entry name" value="bZIP_sf"/>
</dbReference>
<dbReference type="InterPro" id="IPR011333">
    <property type="entry name" value="SKP1/BTB/POZ_sf"/>
</dbReference>
<dbReference type="InterPro" id="IPR008917">
    <property type="entry name" value="TF_DNA-bd_sf"/>
</dbReference>
<dbReference type="InterPro" id="IPR050457">
    <property type="entry name" value="ZnFinger_BTB_dom_contain"/>
</dbReference>
<dbReference type="PANTHER" id="PTHR46105">
    <property type="entry name" value="AGAP004733-PA"/>
    <property type="match status" value="1"/>
</dbReference>
<dbReference type="PANTHER" id="PTHR46105:SF8">
    <property type="entry name" value="TRANSCRIPTION REGULATOR PROTEIN BACH2"/>
    <property type="match status" value="1"/>
</dbReference>
<dbReference type="Pfam" id="PF00651">
    <property type="entry name" value="BTB"/>
    <property type="match status" value="1"/>
</dbReference>
<dbReference type="Pfam" id="PF03131">
    <property type="entry name" value="bZIP_Maf"/>
    <property type="match status" value="1"/>
</dbReference>
<dbReference type="SMART" id="SM00338">
    <property type="entry name" value="BRLZ"/>
    <property type="match status" value="1"/>
</dbReference>
<dbReference type="SMART" id="SM00225">
    <property type="entry name" value="BTB"/>
    <property type="match status" value="1"/>
</dbReference>
<dbReference type="SUPFAM" id="SSF47454">
    <property type="entry name" value="A DNA-binding domain in eukaryotic transcription factors"/>
    <property type="match status" value="1"/>
</dbReference>
<dbReference type="SUPFAM" id="SSF57959">
    <property type="entry name" value="Leucine zipper domain"/>
    <property type="match status" value="1"/>
</dbReference>
<dbReference type="SUPFAM" id="SSF54695">
    <property type="entry name" value="POZ domain"/>
    <property type="match status" value="1"/>
</dbReference>
<dbReference type="PROSITE" id="PS50097">
    <property type="entry name" value="BTB"/>
    <property type="match status" value="1"/>
</dbReference>
<dbReference type="PROSITE" id="PS50217">
    <property type="entry name" value="BZIP"/>
    <property type="match status" value="1"/>
</dbReference>
<dbReference type="PROSITE" id="PS00036">
    <property type="entry name" value="BZIP_BASIC"/>
    <property type="match status" value="1"/>
</dbReference>
<gene>
    <name type="primary">Bach2</name>
</gene>
<reference key="1">
    <citation type="journal article" date="1996" name="Mol. Cell. Biol.">
        <title>Bach proteins belong to a novel family of BTB-basic leucine zipper transcription factors that interact with MafK and regulate transcription through the NF-E2 site.</title>
        <authorList>
            <person name="Oyake T."/>
            <person name="Itoh K."/>
            <person name="Motohashi H."/>
            <person name="Hayashi N."/>
            <person name="Hoshino H."/>
            <person name="Nishizawa M."/>
            <person name="Yamamoto M."/>
            <person name="Igarashi K."/>
        </authorList>
    </citation>
    <scope>NUCLEOTIDE SEQUENCE [MRNA] (ISOFORM 2)</scope>
    <scope>FUNCTION</scope>
    <scope>SUBUNIT</scope>
    <scope>TISSUE SPECIFICITY</scope>
    <scope>DEVELOPMENTAL STAGE</scope>
    <source>
        <strain>BALB/cJ</strain>
    </source>
</reference>
<reference key="2">
    <citation type="journal article" date="2009" name="PLoS Biol.">
        <title>Lineage-specific biology revealed by a finished genome assembly of the mouse.</title>
        <authorList>
            <person name="Church D.M."/>
            <person name="Goodstadt L."/>
            <person name="Hillier L.W."/>
            <person name="Zody M.C."/>
            <person name="Goldstein S."/>
            <person name="She X."/>
            <person name="Bult C.J."/>
            <person name="Agarwala R."/>
            <person name="Cherry J.L."/>
            <person name="DiCuccio M."/>
            <person name="Hlavina W."/>
            <person name="Kapustin Y."/>
            <person name="Meric P."/>
            <person name="Maglott D."/>
            <person name="Birtle Z."/>
            <person name="Marques A.C."/>
            <person name="Graves T."/>
            <person name="Zhou S."/>
            <person name="Teague B."/>
            <person name="Potamousis K."/>
            <person name="Churas C."/>
            <person name="Place M."/>
            <person name="Herschleb J."/>
            <person name="Runnheim R."/>
            <person name="Forrest D."/>
            <person name="Amos-Landgraf J."/>
            <person name="Schwartz D.C."/>
            <person name="Cheng Z."/>
            <person name="Lindblad-Toh K."/>
            <person name="Eichler E.E."/>
            <person name="Ponting C.P."/>
        </authorList>
    </citation>
    <scope>NUCLEOTIDE SEQUENCE [LARGE SCALE GENOMIC DNA]</scope>
    <source>
        <strain>C57BL/6J</strain>
    </source>
</reference>
<reference key="3">
    <citation type="journal article" date="2004" name="Genome Res.">
        <title>The status, quality, and expansion of the NIH full-length cDNA project: the Mammalian Gene Collection (MGC).</title>
        <authorList>
            <consortium name="The MGC Project Team"/>
        </authorList>
    </citation>
    <scope>NUCLEOTIDE SEQUENCE [LARGE SCALE MRNA] (ISOFORM 1)</scope>
</reference>
<reference key="4">
    <citation type="journal article" date="2000" name="J. Biol. Chem.">
        <title>Oxidative stress abolishes leptomycin B-sensitive nuclear export of transcription repressor Bach2 that counteracts activation of Maf recognition element.</title>
        <authorList>
            <person name="Hoshino H."/>
            <person name="Kobayashi A."/>
            <person name="Yoshida M."/>
            <person name="Kudo N."/>
            <person name="Oyake T."/>
            <person name="Motohashi H."/>
            <person name="Hayashi N."/>
            <person name="Yamamoto M."/>
            <person name="Igarashi K."/>
        </authorList>
    </citation>
    <scope>SUBCELLULAR LOCATION</scope>
    <scope>NUCLEAR EXPORT SIGNAL</scope>
</reference>
<reference key="5">
    <citation type="journal article" date="2007" name="Proc. Natl. Acad. Sci. U.S.A.">
        <title>Large-scale phosphorylation analysis of mouse liver.</title>
        <authorList>
            <person name="Villen J."/>
            <person name="Beausoleil S.A."/>
            <person name="Gerber S.A."/>
            <person name="Gygi S.P."/>
        </authorList>
    </citation>
    <scope>IDENTIFICATION BY MASS SPECTROMETRY [LARGE SCALE ANALYSIS]</scope>
    <source>
        <tissue>Liver</tissue>
    </source>
</reference>
<reference key="6">
    <citation type="journal article" date="2010" name="Cell">
        <title>A tissue-specific atlas of mouse protein phosphorylation and expression.</title>
        <authorList>
            <person name="Huttlin E.L."/>
            <person name="Jedrychowski M.P."/>
            <person name="Elias J.E."/>
            <person name="Goswami T."/>
            <person name="Rad R."/>
            <person name="Beausoleil S.A."/>
            <person name="Villen J."/>
            <person name="Haas W."/>
            <person name="Sowa M.E."/>
            <person name="Gygi S.P."/>
        </authorList>
    </citation>
    <scope>PHOSPHORYLATION [LARGE SCALE ANALYSIS] AT SER-314</scope>
    <scope>IDENTIFICATION BY MASS SPECTROMETRY [LARGE SCALE ANALYSIS]</scope>
    <source>
        <tissue>Lung</tissue>
        <tissue>Spleen</tissue>
    </source>
</reference>
<reference key="7">
    <citation type="journal article" date="2015" name="J. Cell Sci.">
        <title>Genome-wide RNAi screen for nuclear actin reveals a network of cofilin regulators.</title>
        <authorList>
            <person name="Dopie J."/>
            <person name="Rajakylae E.K."/>
            <person name="Joensuu M.S."/>
            <person name="Huet G."/>
            <person name="Ferrantelli E."/>
            <person name="Xie T."/>
            <person name="Jaeaelinoja H."/>
            <person name="Jokitalo E."/>
            <person name="Vartiainen M.K."/>
        </authorList>
    </citation>
    <scope>FUNCTION</scope>
</reference>
<reference key="8">
    <citation type="journal article" date="2017" name="Nat. Immunol.">
        <title>BACH2 immunodeficiency illustrates an association between super-enhancers and haploinsufficiency.</title>
        <authorList>
            <person name="Afzali B."/>
            <person name="Groenholm J."/>
            <person name="Vandrovcova J."/>
            <person name="O'Brien C."/>
            <person name="Sun H.W."/>
            <person name="Vanderleyden I."/>
            <person name="Davis F.P."/>
            <person name="Khoder A."/>
            <person name="Zhang Y."/>
            <person name="Hegazy A.N."/>
            <person name="Villarino A.V."/>
            <person name="Palmer I.W."/>
            <person name="Kaufman J."/>
            <person name="Watts N.R."/>
            <person name="Kazemian M."/>
            <person name="Kamenyeva O."/>
            <person name="Keith J."/>
            <person name="Sayed A."/>
            <person name="Kasperaviciute D."/>
            <person name="Mueller M."/>
            <person name="Hughes J.D."/>
            <person name="Fuss I.J."/>
            <person name="Sadiyah M.F."/>
            <person name="Montgomery-Recht K."/>
            <person name="McElwee J."/>
            <person name="Restifo N.P."/>
            <person name="Strober W."/>
            <person name="Linterman M.A."/>
            <person name="Wingfield P.T."/>
            <person name="Uhlig H.H."/>
            <person name="Roychoudhuri R."/>
            <person name="Aitman T.J."/>
            <person name="Kelleher P."/>
            <person name="Lenardo M.J."/>
            <person name="O'Shea J.J."/>
            <person name="Cooper N."/>
            <person name="Laurence A.D.J."/>
        </authorList>
    </citation>
    <scope>FUNCTION</scope>
</reference>
<evidence type="ECO:0000250" key="1">
    <source>
        <dbReference type="UniProtKB" id="Q9BYV9"/>
    </source>
</evidence>
<evidence type="ECO:0000255" key="2">
    <source>
        <dbReference type="PROSITE-ProRule" id="PRU00037"/>
    </source>
</evidence>
<evidence type="ECO:0000255" key="3">
    <source>
        <dbReference type="PROSITE-ProRule" id="PRU00978"/>
    </source>
</evidence>
<evidence type="ECO:0000256" key="4">
    <source>
        <dbReference type="SAM" id="MobiDB-lite"/>
    </source>
</evidence>
<evidence type="ECO:0000269" key="5">
    <source>
    </source>
</evidence>
<evidence type="ECO:0000269" key="6">
    <source>
    </source>
</evidence>
<evidence type="ECO:0000269" key="7">
    <source>
    </source>
</evidence>
<evidence type="ECO:0000269" key="8">
    <source>
    </source>
</evidence>
<evidence type="ECO:0000303" key="9">
    <source>
    </source>
</evidence>
<evidence type="ECO:0000305" key="10"/>
<evidence type="ECO:0007744" key="11">
    <source>
    </source>
</evidence>
<sequence length="839" mass="91836">MSVDEKPGSPMYVYESTVHCANILLGLNDQRKKDILCDVTLIVERKEFRAHRAVLAACSEYFWQALVGQTKDDLVVSLPEEVTARGFGPLLQFAYTAKLLLSRENIREVIRCAEFLRMHNLEDSCFSFLQTQLLNREDGLFVCRKDSACQRPQEDHGNSAGEEEEEEETMDSETARMACATDQMLPDPISFEATAIPVAEKEEALLPESEVPTDTKENSEKGALTQYPRYKKYQLACTKNVYSAPSHGTSGFASTFSEDSPGNSLKPGLPMGQIKSEPPSEETEEESITLCLSGDETDIKDRPGDVEMDRKQPSPAPTPSTPTGAACLDRSRSVSSPSCLRSLFGITKGVESTGLPSTSQQPLVRSSACPFNKGISQGDLKTDYTPLAGNYGQPHVGQKDVSNFAMGSPLRGPGPETLCKQEGELDRRSVIFSASACDQPNTPVHSYSAVSNLDKDLSEPVPKSLWVGAGQSLPSSQAYSHSGLMADHLPGRIRPNTSCPVPIKVCPRSPPLETRTRTSSSCSSYSYAEDGSGGSPCSLPLCEFSSSPCSQGARFLATEHQEPGLMGDGMYNQVRPQIKCEQSYGTNSSDESGSFSEADSESCPVQDRGQEVKLPFPVDQITDLPRNDFQMMIKMHKLTSEQLEFIHDIRRRSKNRIAAQRCRKRKLDCIQNLECEIRKLVCEKEKLLSERNHLKACMGELLDNFSCLSQEVCRDIQSPEQIQALHRYCPVLIPMDLPGASVNPPPVGVEQSLAPSPCAVGGSVPCCLEPGAAPPGLPWVPSNTSENCTSGRRLEGSDPGTFSERGPPLEARSQSVTVDFCQEMTEKCTTDEQPRKDYA</sequence>
<protein>
    <recommendedName>
        <fullName>Transcription regulator protein BACH2</fullName>
    </recommendedName>
    <alternativeName>
        <fullName>BTB and CNC homolog 2</fullName>
    </alternativeName>
</protein>
<proteinExistence type="evidence at protein level"/>
<feature type="chain" id="PRO_0000076457" description="Transcription regulator protein BACH2">
    <location>
        <begin position="1"/>
        <end position="839"/>
    </location>
</feature>
<feature type="domain" description="BTB" evidence="2">
    <location>
        <begin position="37"/>
        <end position="103"/>
    </location>
</feature>
<feature type="domain" description="bZIP" evidence="3">
    <location>
        <begin position="645"/>
        <end position="708"/>
    </location>
</feature>
<feature type="region of interest" description="Disordered" evidence="4">
    <location>
        <begin position="150"/>
        <end position="170"/>
    </location>
</feature>
<feature type="region of interest" description="Disordered" evidence="4">
    <location>
        <begin position="247"/>
        <end position="331"/>
    </location>
</feature>
<feature type="region of interest" description="Disordered" evidence="4">
    <location>
        <begin position="582"/>
        <end position="609"/>
    </location>
</feature>
<feature type="region of interest" description="Basic motif" evidence="3">
    <location>
        <begin position="650"/>
        <end position="666"/>
    </location>
</feature>
<feature type="region of interest" description="Leucine-zipper" evidence="3">
    <location>
        <begin position="670"/>
        <end position="677"/>
    </location>
</feature>
<feature type="region of interest" description="Disordered" evidence="4">
    <location>
        <begin position="778"/>
        <end position="813"/>
    </location>
</feature>
<feature type="short sequence motif" description="Nuclear export signal">
    <location>
        <begin position="819"/>
        <end position="839"/>
    </location>
</feature>
<feature type="compositionally biased region" description="Acidic residues" evidence="4">
    <location>
        <begin position="161"/>
        <end position="170"/>
    </location>
</feature>
<feature type="compositionally biased region" description="Polar residues" evidence="4">
    <location>
        <begin position="247"/>
        <end position="263"/>
    </location>
</feature>
<feature type="compositionally biased region" description="Basic and acidic residues" evidence="4">
    <location>
        <begin position="297"/>
        <end position="312"/>
    </location>
</feature>
<feature type="compositionally biased region" description="Low complexity" evidence="4">
    <location>
        <begin position="321"/>
        <end position="331"/>
    </location>
</feature>
<feature type="compositionally biased region" description="Polar residues" evidence="4">
    <location>
        <begin position="583"/>
        <end position="597"/>
    </location>
</feature>
<feature type="compositionally biased region" description="Polar residues" evidence="4">
    <location>
        <begin position="781"/>
        <end position="790"/>
    </location>
</feature>
<feature type="modified residue" description="Phosphoserine" evidence="11">
    <location>
        <position position="314"/>
    </location>
</feature>
<feature type="modified residue" description="Phosphoserine" evidence="1">
    <location>
        <position position="520"/>
    </location>
</feature>
<feature type="disulfide bond" description="Interchain; redox-active" evidence="1">
    <location>
        <position position="20"/>
    </location>
</feature>
<feature type="cross-link" description="Glycyl lysine isopeptide (Lys-Gly) (interchain with G-Cter in SUMO2)" evidence="1">
    <location>
        <position position="381"/>
    </location>
</feature>
<feature type="cross-link" description="Glycyl lysine isopeptide (Lys-Gly) (interchain with G-Cter in SUMO2)" evidence="1">
    <location>
        <position position="420"/>
    </location>
</feature>
<feature type="splice variant" id="VSP_047933" description="In isoform 2." evidence="9">
    <location>
        <begin position="421"/>
        <end position="543"/>
    </location>
</feature>
<feature type="sequence conflict" description="In Ref. 3; AAI31643." evidence="10" ref="3">
    <original>E</original>
    <variation>G</variation>
    <location>
        <position position="220"/>
    </location>
</feature>
<feature type="sequence conflict" description="In Ref. 1; BAA13138." evidence="10" ref="1">
    <original>P</original>
    <variation>R</variation>
    <location>
        <position position="317"/>
    </location>
</feature>
<feature type="sequence conflict" description="In Ref. 1; BAA13138." evidence="10" ref="1">
    <original>P</original>
    <variation>R</variation>
    <location>
        <position position="322"/>
    </location>
</feature>
<feature type="sequence conflict" description="In Ref. 1; BAA13138." evidence="10" ref="1">
    <original>K</original>
    <variation>E</variation>
    <location>
        <position position="420"/>
    </location>
</feature>
<name>BACH2_MOUSE</name>
<keyword id="KW-0010">Activator</keyword>
<keyword id="KW-0025">Alternative splicing</keyword>
<keyword id="KW-0963">Cytoplasm</keyword>
<keyword id="KW-1015">Disulfide bond</keyword>
<keyword id="KW-0238">DNA-binding</keyword>
<keyword id="KW-1017">Isopeptide bond</keyword>
<keyword id="KW-0539">Nucleus</keyword>
<keyword id="KW-0597">Phosphoprotein</keyword>
<keyword id="KW-1185">Reference proteome</keyword>
<keyword id="KW-0678">Repressor</keyword>
<keyword id="KW-0804">Transcription</keyword>
<keyword id="KW-0805">Transcription regulation</keyword>
<keyword id="KW-0832">Ubl conjugation</keyword>